<accession>A6VUG0</accession>
<evidence type="ECO:0000255" key="1">
    <source>
        <dbReference type="HAMAP-Rule" id="MF_01255"/>
    </source>
</evidence>
<name>ECTC_MARMS</name>
<organism>
    <name type="scientific">Marinomonas sp. (strain MWYL1)</name>
    <dbReference type="NCBI Taxonomy" id="400668"/>
    <lineage>
        <taxon>Bacteria</taxon>
        <taxon>Pseudomonadati</taxon>
        <taxon>Pseudomonadota</taxon>
        <taxon>Gammaproteobacteria</taxon>
        <taxon>Oceanospirillales</taxon>
        <taxon>Oceanospirillaceae</taxon>
        <taxon>Marinomonas</taxon>
    </lineage>
</organism>
<proteinExistence type="inferred from homology"/>
<keyword id="KW-0456">Lyase</keyword>
<feature type="chain" id="PRO_1000085806" description="L-ectoine synthase">
    <location>
        <begin position="1"/>
        <end position="129"/>
    </location>
</feature>
<protein>
    <recommendedName>
        <fullName evidence="1">L-ectoine synthase</fullName>
        <ecNumber evidence="1">4.2.1.108</ecNumber>
    </recommendedName>
    <alternativeName>
        <fullName evidence="1">N-acetyldiaminobutyrate dehydratase</fullName>
    </alternativeName>
</protein>
<sequence>MFARDLAECEKTERRVVSPDGNWESTRLLLKEDNMGFSFHITTIYEGKDFDMHYQNHLESVYCISGEGEVESRETGQKHHIKPGVVYVLDKHDAHTLRAFKELKLACVFNPPITGKEVHNSEGAYEILE</sequence>
<comment type="function">
    <text evidence="1">Catalyzes the circularization of gamma-N-acetyl-alpha,gamma-diaminobutyric acid (ADABA) to ectoine (1,4,5,6-tetrahydro-2-methyl-4-pyrimidine carboxylic acid), which is an excellent osmoprotectant.</text>
</comment>
<comment type="catalytic activity">
    <reaction evidence="1">
        <text>(2S)-4-acetamido-2-aminobutanoate = L-ectoine + H2O</text>
        <dbReference type="Rhea" id="RHEA:17281"/>
        <dbReference type="ChEBI" id="CHEBI:15377"/>
        <dbReference type="ChEBI" id="CHEBI:58515"/>
        <dbReference type="ChEBI" id="CHEBI:58929"/>
        <dbReference type="EC" id="4.2.1.108"/>
    </reaction>
</comment>
<comment type="pathway">
    <text evidence="1">Amine and polyamine biosynthesis; ectoine biosynthesis; L-ectoine from L-aspartate 4-semialdehyde: step 3/3.</text>
</comment>
<comment type="similarity">
    <text evidence="1">Belongs to the ectoine synthase family.</text>
</comment>
<gene>
    <name evidence="1" type="primary">ectC</name>
    <name type="ordered locus">Mmwyl1_1160</name>
</gene>
<reference key="1">
    <citation type="submission" date="2007-06" db="EMBL/GenBank/DDBJ databases">
        <title>Complete sequence of Marinomonas sp. MWYL1.</title>
        <authorList>
            <consortium name="US DOE Joint Genome Institute"/>
            <person name="Copeland A."/>
            <person name="Lucas S."/>
            <person name="Lapidus A."/>
            <person name="Barry K."/>
            <person name="Glavina del Rio T."/>
            <person name="Dalin E."/>
            <person name="Tice H."/>
            <person name="Pitluck S."/>
            <person name="Kiss H."/>
            <person name="Brettin T."/>
            <person name="Bruce D."/>
            <person name="Detter J.C."/>
            <person name="Han C."/>
            <person name="Schmutz J."/>
            <person name="Larimer F."/>
            <person name="Land M."/>
            <person name="Hauser L."/>
            <person name="Kyrpides N."/>
            <person name="Kim E."/>
            <person name="Johnston A.W.B."/>
            <person name="Todd J.D."/>
            <person name="Rogers R."/>
            <person name="Wexler M."/>
            <person name="Bond P.L."/>
            <person name="Li Y."/>
            <person name="Richardson P."/>
        </authorList>
    </citation>
    <scope>NUCLEOTIDE SEQUENCE [LARGE SCALE GENOMIC DNA]</scope>
    <source>
        <strain>MWYL1</strain>
    </source>
</reference>
<dbReference type="EC" id="4.2.1.108" evidence="1"/>
<dbReference type="EMBL" id="CP000749">
    <property type="protein sequence ID" value="ABR70089.1"/>
    <property type="molecule type" value="Genomic_DNA"/>
</dbReference>
<dbReference type="SMR" id="A6VUG0"/>
<dbReference type="STRING" id="400668.Mmwyl1_1160"/>
<dbReference type="KEGG" id="mmw:Mmwyl1_1160"/>
<dbReference type="eggNOG" id="COG1917">
    <property type="taxonomic scope" value="Bacteria"/>
</dbReference>
<dbReference type="HOGENOM" id="CLU_154525_0_0_6"/>
<dbReference type="OrthoDB" id="9801830at2"/>
<dbReference type="UniPathway" id="UPA00067">
    <property type="reaction ID" value="UER00123"/>
</dbReference>
<dbReference type="GO" id="GO:0033990">
    <property type="term" value="F:ectoine synthase activity"/>
    <property type="evidence" value="ECO:0007669"/>
    <property type="project" value="UniProtKB-EC"/>
</dbReference>
<dbReference type="GO" id="GO:0019491">
    <property type="term" value="P:ectoine biosynthetic process"/>
    <property type="evidence" value="ECO:0007669"/>
    <property type="project" value="UniProtKB-UniRule"/>
</dbReference>
<dbReference type="CDD" id="cd06978">
    <property type="entry name" value="cupin_EctC"/>
    <property type="match status" value="1"/>
</dbReference>
<dbReference type="Gene3D" id="2.60.120.10">
    <property type="entry name" value="Jelly Rolls"/>
    <property type="match status" value="1"/>
</dbReference>
<dbReference type="HAMAP" id="MF_01255">
    <property type="entry name" value="Ectoine_synth"/>
    <property type="match status" value="1"/>
</dbReference>
<dbReference type="InterPro" id="IPR010462">
    <property type="entry name" value="Ectoine_synth"/>
</dbReference>
<dbReference type="InterPro" id="IPR014710">
    <property type="entry name" value="RmlC-like_jellyroll"/>
</dbReference>
<dbReference type="InterPro" id="IPR011051">
    <property type="entry name" value="RmlC_Cupin_sf"/>
</dbReference>
<dbReference type="NCBIfam" id="NF009806">
    <property type="entry name" value="PRK13290.1"/>
    <property type="match status" value="1"/>
</dbReference>
<dbReference type="PANTHER" id="PTHR39289">
    <property type="match status" value="1"/>
</dbReference>
<dbReference type="PANTHER" id="PTHR39289:SF1">
    <property type="entry name" value="L-ECTOINE SYNTHASE"/>
    <property type="match status" value="1"/>
</dbReference>
<dbReference type="Pfam" id="PF06339">
    <property type="entry name" value="Ectoine_synth"/>
    <property type="match status" value="1"/>
</dbReference>
<dbReference type="SUPFAM" id="SSF51182">
    <property type="entry name" value="RmlC-like cupins"/>
    <property type="match status" value="1"/>
</dbReference>